<gene>
    <name evidence="1" type="primary">rsmF</name>
    <name type="ordered locus">EFER_1239</name>
</gene>
<protein>
    <recommendedName>
        <fullName evidence="1">Ribosomal RNA small subunit methyltransferase F</fullName>
        <ecNumber evidence="1">2.1.1.178</ecNumber>
    </recommendedName>
    <alternativeName>
        <fullName evidence="1">16S rRNA m5C1407 methyltransferase</fullName>
    </alternativeName>
    <alternativeName>
        <fullName evidence="1">rRNA (cytosine-C(5)-)-methyltransferase RsmF</fullName>
    </alternativeName>
</protein>
<organism>
    <name type="scientific">Escherichia fergusonii (strain ATCC 35469 / DSM 13698 / CCUG 18766 / IAM 14443 / JCM 21226 / LMG 7866 / NBRC 102419 / NCTC 12128 / CDC 0568-73)</name>
    <dbReference type="NCBI Taxonomy" id="585054"/>
    <lineage>
        <taxon>Bacteria</taxon>
        <taxon>Pseudomonadati</taxon>
        <taxon>Pseudomonadota</taxon>
        <taxon>Gammaproteobacteria</taxon>
        <taxon>Enterobacterales</taxon>
        <taxon>Enterobacteriaceae</taxon>
        <taxon>Escherichia</taxon>
    </lineage>
</organism>
<sequence length="479" mass="53267">MAQHTVYFPDAFLTQMREAMPSTLSFDDFLAACQRPLRRSIRVNTLKISVADFLQLTAPYGWTLTPIPWCEEGFWIERDDEDALPLGSTAEHLSGLFYIQEASSMLPVAALFADGNSPQRVMDVAAAPGSKTTQIAARMNNEGAILANEFSASRVKVLHANISRCGIRNVALTHFDGRVFGAALPEMFDAILLDAPCSGEGVVRKDPDALKNWSPESNQEIAATQRELIDSAFHALRPGGTLVYSTCTLNREENEAVCLWLKETYPDAVEFLPLGDLFPGADKALTEEGFLHVFPQIYDCEGFFVARLRKTQAIPALPAPKYKVGNFPFIPVKNREAGQICQAAASVGLTWDENLRLWQRDKELWLFPVGIEALIGKVRFSRLGIKLAETHNKGYRWQHEAVIALASPDNVNAFELTPQKAEEWYRGRDVYPQAAPVADDVLVTFQHQPIGLAKRIGSRLKNSYPRELVRDGKLFTGNA</sequence>
<name>RSMF_ESCF3</name>
<dbReference type="EC" id="2.1.1.178" evidence="1"/>
<dbReference type="EMBL" id="CU928158">
    <property type="protein sequence ID" value="CAQ88763.1"/>
    <property type="molecule type" value="Genomic_DNA"/>
</dbReference>
<dbReference type="RefSeq" id="WP_015953343.1">
    <property type="nucleotide sequence ID" value="NC_011740.1"/>
</dbReference>
<dbReference type="SMR" id="B7LPL0"/>
<dbReference type="GeneID" id="75057714"/>
<dbReference type="KEGG" id="efe:EFER_1239"/>
<dbReference type="HOGENOM" id="CLU_005316_6_2_6"/>
<dbReference type="OrthoDB" id="9810297at2"/>
<dbReference type="Proteomes" id="UP000000745">
    <property type="component" value="Chromosome"/>
</dbReference>
<dbReference type="GO" id="GO:0005737">
    <property type="term" value="C:cytoplasm"/>
    <property type="evidence" value="ECO:0007669"/>
    <property type="project" value="UniProtKB-SubCell"/>
</dbReference>
<dbReference type="GO" id="GO:0003723">
    <property type="term" value="F:RNA binding"/>
    <property type="evidence" value="ECO:0007669"/>
    <property type="project" value="UniProtKB-KW"/>
</dbReference>
<dbReference type="GO" id="GO:0009383">
    <property type="term" value="F:rRNA (cytosine-C5-)-methyltransferase activity"/>
    <property type="evidence" value="ECO:0007669"/>
    <property type="project" value="TreeGrafter"/>
</dbReference>
<dbReference type="GO" id="GO:0070475">
    <property type="term" value="P:rRNA base methylation"/>
    <property type="evidence" value="ECO:0007669"/>
    <property type="project" value="TreeGrafter"/>
</dbReference>
<dbReference type="CDD" id="cd02440">
    <property type="entry name" value="AdoMet_MTases"/>
    <property type="match status" value="1"/>
</dbReference>
<dbReference type="FunFam" id="3.10.450.720:FF:000001">
    <property type="entry name" value="Ribosomal RNA small subunit methyltransferase F"/>
    <property type="match status" value="1"/>
</dbReference>
<dbReference type="FunFam" id="3.40.50.150:FF:000079">
    <property type="entry name" value="Ribosomal RNA small subunit methyltransferase F"/>
    <property type="match status" value="1"/>
</dbReference>
<dbReference type="Gene3D" id="3.10.450.720">
    <property type="match status" value="1"/>
</dbReference>
<dbReference type="Gene3D" id="3.40.50.150">
    <property type="entry name" value="Vaccinia Virus protein VP39"/>
    <property type="match status" value="1"/>
</dbReference>
<dbReference type="HAMAP" id="MF_01579">
    <property type="entry name" value="16SrRNA_methyltr_F"/>
    <property type="match status" value="1"/>
</dbReference>
<dbReference type="InterPro" id="IPR031341">
    <property type="entry name" value="Methyltr_RsmF_N"/>
</dbReference>
<dbReference type="InterPro" id="IPR049560">
    <property type="entry name" value="MeTrfase_RsmB-F_NOP2_cat"/>
</dbReference>
<dbReference type="InterPro" id="IPR001678">
    <property type="entry name" value="MeTrfase_RsmB-F_NOP2_dom"/>
</dbReference>
<dbReference type="InterPro" id="IPR027391">
    <property type="entry name" value="Nol1_Nop2_Fmu_2"/>
</dbReference>
<dbReference type="InterPro" id="IPR011023">
    <property type="entry name" value="Nop2p"/>
</dbReference>
<dbReference type="InterPro" id="IPR023267">
    <property type="entry name" value="RCMT"/>
</dbReference>
<dbReference type="InterPro" id="IPR023545">
    <property type="entry name" value="rRNA_ssu_MeTfrase_F"/>
</dbReference>
<dbReference type="InterPro" id="IPR018314">
    <property type="entry name" value="RsmB/NOL1/NOP2-like_CS"/>
</dbReference>
<dbReference type="InterPro" id="IPR029063">
    <property type="entry name" value="SAM-dependent_MTases_sf"/>
</dbReference>
<dbReference type="InterPro" id="IPR048457">
    <property type="entry name" value="YebU_pre-PUA_dom"/>
</dbReference>
<dbReference type="NCBIfam" id="TIGR00446">
    <property type="entry name" value="nop2p"/>
    <property type="match status" value="1"/>
</dbReference>
<dbReference type="NCBIfam" id="NF008898">
    <property type="entry name" value="PRK11933.1"/>
    <property type="match status" value="1"/>
</dbReference>
<dbReference type="PANTHER" id="PTHR22807:SF30">
    <property type="entry name" value="28S RRNA (CYTOSINE(4447)-C(5))-METHYLTRANSFERASE-RELATED"/>
    <property type="match status" value="1"/>
</dbReference>
<dbReference type="PANTHER" id="PTHR22807">
    <property type="entry name" value="NOP2 YEAST -RELATED NOL1/NOP2/FMU SUN DOMAIN-CONTAINING"/>
    <property type="match status" value="1"/>
</dbReference>
<dbReference type="Pfam" id="PF01189">
    <property type="entry name" value="Methyltr_RsmB-F"/>
    <property type="match status" value="1"/>
</dbReference>
<dbReference type="Pfam" id="PF17125">
    <property type="entry name" value="Methyltr_RsmF_N"/>
    <property type="match status" value="1"/>
</dbReference>
<dbReference type="Pfam" id="PF13636">
    <property type="entry name" value="Methyltranf_PUA"/>
    <property type="match status" value="1"/>
</dbReference>
<dbReference type="Pfam" id="PF21150">
    <property type="entry name" value="YebU_pre-PUA_dom"/>
    <property type="match status" value="1"/>
</dbReference>
<dbReference type="PRINTS" id="PR02008">
    <property type="entry name" value="RCMTFAMILY"/>
</dbReference>
<dbReference type="SUPFAM" id="SSF53335">
    <property type="entry name" value="S-adenosyl-L-methionine-dependent methyltransferases"/>
    <property type="match status" value="1"/>
</dbReference>
<dbReference type="PROSITE" id="PS01153">
    <property type="entry name" value="NOL1_NOP2_SUN"/>
    <property type="match status" value="1"/>
</dbReference>
<dbReference type="PROSITE" id="PS51686">
    <property type="entry name" value="SAM_MT_RSMB_NOP"/>
    <property type="match status" value="1"/>
</dbReference>
<comment type="function">
    <text evidence="1">Specifically methylates the cytosine at position 1407 (m5C1407) of 16S rRNA.</text>
</comment>
<comment type="catalytic activity">
    <reaction evidence="1">
        <text>cytidine(1407) in 16S rRNA + S-adenosyl-L-methionine = 5-methylcytidine(1407) in 16S rRNA + S-adenosyl-L-homocysteine + H(+)</text>
        <dbReference type="Rhea" id="RHEA:42756"/>
        <dbReference type="Rhea" id="RHEA-COMP:10223"/>
        <dbReference type="Rhea" id="RHEA-COMP:10224"/>
        <dbReference type="ChEBI" id="CHEBI:15378"/>
        <dbReference type="ChEBI" id="CHEBI:57856"/>
        <dbReference type="ChEBI" id="CHEBI:59789"/>
        <dbReference type="ChEBI" id="CHEBI:74483"/>
        <dbReference type="ChEBI" id="CHEBI:82748"/>
        <dbReference type="EC" id="2.1.1.178"/>
    </reaction>
</comment>
<comment type="subcellular location">
    <subcellularLocation>
        <location evidence="1">Cytoplasm</location>
    </subcellularLocation>
</comment>
<comment type="similarity">
    <text evidence="1">Belongs to the class I-like SAM-binding methyltransferase superfamily. RsmB/NOP family.</text>
</comment>
<feature type="chain" id="PRO_1000147570" description="Ribosomal RNA small subunit methyltransferase F">
    <location>
        <begin position="1"/>
        <end position="479"/>
    </location>
</feature>
<feature type="active site" description="Nucleophile" evidence="1">
    <location>
        <position position="247"/>
    </location>
</feature>
<feature type="binding site" evidence="1">
    <location>
        <begin position="125"/>
        <end position="131"/>
    </location>
    <ligand>
        <name>S-adenosyl-L-methionine</name>
        <dbReference type="ChEBI" id="CHEBI:59789"/>
    </ligand>
</feature>
<feature type="binding site" evidence="1">
    <location>
        <position position="149"/>
    </location>
    <ligand>
        <name>S-adenosyl-L-methionine</name>
        <dbReference type="ChEBI" id="CHEBI:59789"/>
    </ligand>
</feature>
<feature type="binding site" evidence="1">
    <location>
        <position position="176"/>
    </location>
    <ligand>
        <name>S-adenosyl-L-methionine</name>
        <dbReference type="ChEBI" id="CHEBI:59789"/>
    </ligand>
</feature>
<feature type="binding site" evidence="1">
    <location>
        <position position="194"/>
    </location>
    <ligand>
        <name>S-adenosyl-L-methionine</name>
        <dbReference type="ChEBI" id="CHEBI:59789"/>
    </ligand>
</feature>
<keyword id="KW-0963">Cytoplasm</keyword>
<keyword id="KW-0489">Methyltransferase</keyword>
<keyword id="KW-0694">RNA-binding</keyword>
<keyword id="KW-0698">rRNA processing</keyword>
<keyword id="KW-0949">S-adenosyl-L-methionine</keyword>
<keyword id="KW-0808">Transferase</keyword>
<reference key="1">
    <citation type="journal article" date="2009" name="PLoS Genet.">
        <title>Organised genome dynamics in the Escherichia coli species results in highly diverse adaptive paths.</title>
        <authorList>
            <person name="Touchon M."/>
            <person name="Hoede C."/>
            <person name="Tenaillon O."/>
            <person name="Barbe V."/>
            <person name="Baeriswyl S."/>
            <person name="Bidet P."/>
            <person name="Bingen E."/>
            <person name="Bonacorsi S."/>
            <person name="Bouchier C."/>
            <person name="Bouvet O."/>
            <person name="Calteau A."/>
            <person name="Chiapello H."/>
            <person name="Clermont O."/>
            <person name="Cruveiller S."/>
            <person name="Danchin A."/>
            <person name="Diard M."/>
            <person name="Dossat C."/>
            <person name="Karoui M.E."/>
            <person name="Frapy E."/>
            <person name="Garry L."/>
            <person name="Ghigo J.M."/>
            <person name="Gilles A.M."/>
            <person name="Johnson J."/>
            <person name="Le Bouguenec C."/>
            <person name="Lescat M."/>
            <person name="Mangenot S."/>
            <person name="Martinez-Jehanne V."/>
            <person name="Matic I."/>
            <person name="Nassif X."/>
            <person name="Oztas S."/>
            <person name="Petit M.A."/>
            <person name="Pichon C."/>
            <person name="Rouy Z."/>
            <person name="Ruf C.S."/>
            <person name="Schneider D."/>
            <person name="Tourret J."/>
            <person name="Vacherie B."/>
            <person name="Vallenet D."/>
            <person name="Medigue C."/>
            <person name="Rocha E.P.C."/>
            <person name="Denamur E."/>
        </authorList>
    </citation>
    <scope>NUCLEOTIDE SEQUENCE [LARGE SCALE GENOMIC DNA]</scope>
    <source>
        <strain>ATCC 35469 / DSM 13698 / BCRC 15582 / CCUG 18766 / IAM 14443 / JCM 21226 / LMG 7866 / NBRC 102419 / NCTC 12128 / CDC 0568-73</strain>
    </source>
</reference>
<proteinExistence type="inferred from homology"/>
<accession>B7LPL0</accession>
<evidence type="ECO:0000255" key="1">
    <source>
        <dbReference type="HAMAP-Rule" id="MF_01579"/>
    </source>
</evidence>